<sequence>MANPTGNQPVSYPIFTVRWLAVHTLAVPTVFFIGAIAAMQFIQR</sequence>
<evidence type="ECO:0000255" key="1">
    <source>
        <dbReference type="HAMAP-Rule" id="MF_00643"/>
    </source>
</evidence>
<dbReference type="EMBL" id="CP001291">
    <property type="protein sequence ID" value="ACK69270.1"/>
    <property type="molecule type" value="Genomic_DNA"/>
</dbReference>
<dbReference type="RefSeq" id="WP_012598217.1">
    <property type="nucleotide sequence ID" value="NC_011729.1"/>
</dbReference>
<dbReference type="SMR" id="B7KH61"/>
<dbReference type="STRING" id="65393.PCC7424_0814"/>
<dbReference type="KEGG" id="cyc:PCC7424_0814"/>
<dbReference type="eggNOG" id="ENOG50332KX">
    <property type="taxonomic scope" value="Bacteria"/>
</dbReference>
<dbReference type="HOGENOM" id="CLU_211753_1_0_3"/>
<dbReference type="OrthoDB" id="532613at2"/>
<dbReference type="Proteomes" id="UP000002384">
    <property type="component" value="Chromosome"/>
</dbReference>
<dbReference type="GO" id="GO:0009539">
    <property type="term" value="C:photosystem II reaction center"/>
    <property type="evidence" value="ECO:0007669"/>
    <property type="project" value="InterPro"/>
</dbReference>
<dbReference type="GO" id="GO:0031676">
    <property type="term" value="C:plasma membrane-derived thylakoid membrane"/>
    <property type="evidence" value="ECO:0007669"/>
    <property type="project" value="UniProtKB-SubCell"/>
</dbReference>
<dbReference type="GO" id="GO:0009055">
    <property type="term" value="F:electron transfer activity"/>
    <property type="evidence" value="ECO:0007669"/>
    <property type="project" value="UniProtKB-UniRule"/>
</dbReference>
<dbReference type="GO" id="GO:0020037">
    <property type="term" value="F:heme binding"/>
    <property type="evidence" value="ECO:0007669"/>
    <property type="project" value="InterPro"/>
</dbReference>
<dbReference type="GO" id="GO:0005506">
    <property type="term" value="F:iron ion binding"/>
    <property type="evidence" value="ECO:0007669"/>
    <property type="project" value="UniProtKB-UniRule"/>
</dbReference>
<dbReference type="GO" id="GO:0009767">
    <property type="term" value="P:photosynthetic electron transport chain"/>
    <property type="evidence" value="ECO:0007669"/>
    <property type="project" value="InterPro"/>
</dbReference>
<dbReference type="HAMAP" id="MF_00643">
    <property type="entry name" value="PSII_PsbF"/>
    <property type="match status" value="1"/>
</dbReference>
<dbReference type="InterPro" id="IPR006241">
    <property type="entry name" value="PSII_cyt_b559_bsu"/>
</dbReference>
<dbReference type="InterPro" id="IPR006216">
    <property type="entry name" value="PSII_cyt_b559_CS"/>
</dbReference>
<dbReference type="InterPro" id="IPR013081">
    <property type="entry name" value="PSII_cyt_b559_N"/>
</dbReference>
<dbReference type="NCBIfam" id="TIGR01333">
    <property type="entry name" value="cyt_b559_beta"/>
    <property type="match status" value="1"/>
</dbReference>
<dbReference type="Pfam" id="PF00283">
    <property type="entry name" value="Cytochrom_B559"/>
    <property type="match status" value="1"/>
</dbReference>
<dbReference type="PIRSF" id="PIRSF000037">
    <property type="entry name" value="PsbF"/>
    <property type="match status" value="1"/>
</dbReference>
<dbReference type="SUPFAM" id="SSF161045">
    <property type="entry name" value="Cytochrome b559 subunits"/>
    <property type="match status" value="1"/>
</dbReference>
<dbReference type="PROSITE" id="PS00537">
    <property type="entry name" value="CYTOCHROME_B559"/>
    <property type="match status" value="1"/>
</dbReference>
<reference key="1">
    <citation type="journal article" date="2011" name="MBio">
        <title>Novel metabolic attributes of the genus Cyanothece, comprising a group of unicellular nitrogen-fixing Cyanobacteria.</title>
        <authorList>
            <person name="Bandyopadhyay A."/>
            <person name="Elvitigala T."/>
            <person name="Welsh E."/>
            <person name="Stockel J."/>
            <person name="Liberton M."/>
            <person name="Min H."/>
            <person name="Sherman L.A."/>
            <person name="Pakrasi H.B."/>
        </authorList>
    </citation>
    <scope>NUCLEOTIDE SEQUENCE [LARGE SCALE GENOMIC DNA]</scope>
    <source>
        <strain>PCC 7424</strain>
    </source>
</reference>
<gene>
    <name evidence="1" type="primary">psbF</name>
    <name type="ordered locus">PCC7424_0814</name>
</gene>
<proteinExistence type="inferred from homology"/>
<protein>
    <recommendedName>
        <fullName evidence="1">Cytochrome b559 subunit beta</fullName>
    </recommendedName>
    <alternativeName>
        <fullName evidence="1">PSII reaction center subunit VI</fullName>
    </alternativeName>
</protein>
<accession>B7KH61</accession>
<feature type="chain" id="PRO_1000130903" description="Cytochrome b559 subunit beta">
    <location>
        <begin position="1"/>
        <end position="44"/>
    </location>
</feature>
<feature type="transmembrane region" description="Helical" evidence="1">
    <location>
        <begin position="19"/>
        <end position="35"/>
    </location>
</feature>
<feature type="binding site" description="axial binding residue" evidence="1">
    <location>
        <position position="23"/>
    </location>
    <ligand>
        <name>heme</name>
        <dbReference type="ChEBI" id="CHEBI:30413"/>
        <note>ligand shared with alpha subunit</note>
    </ligand>
    <ligandPart>
        <name>Fe</name>
        <dbReference type="ChEBI" id="CHEBI:18248"/>
    </ligandPart>
</feature>
<organism>
    <name type="scientific">Gloeothece citriformis (strain PCC 7424)</name>
    <name type="common">Cyanothece sp. (strain PCC 7424)</name>
    <dbReference type="NCBI Taxonomy" id="65393"/>
    <lineage>
        <taxon>Bacteria</taxon>
        <taxon>Bacillati</taxon>
        <taxon>Cyanobacteriota</taxon>
        <taxon>Cyanophyceae</taxon>
        <taxon>Oscillatoriophycideae</taxon>
        <taxon>Chroococcales</taxon>
        <taxon>Aphanothecaceae</taxon>
        <taxon>Gloeothece</taxon>
        <taxon>Gloeothece citriformis</taxon>
    </lineage>
</organism>
<comment type="function">
    <text evidence="1">This b-type cytochrome is tightly associated with the reaction center of photosystem II (PSII). PSII is a light-driven water:plastoquinone oxidoreductase that uses light energy to abstract electrons from H(2)O, generating O(2) and a proton gradient subsequently used for ATP formation. It consists of a core antenna complex that captures photons, and an electron transfer chain that converts photonic excitation into a charge separation.</text>
</comment>
<comment type="cofactor">
    <cofactor evidence="1">
        <name>heme b</name>
        <dbReference type="ChEBI" id="CHEBI:60344"/>
    </cofactor>
    <text evidence="1">With its partner (PsbE) binds heme. PSII binds additional chlorophylls, carotenoids and specific lipids.</text>
</comment>
<comment type="subunit">
    <text evidence="1">Heterodimer of an alpha subunit and a beta subunit. PSII is composed of 1 copy each of membrane proteins PsbA, PsbB, PsbC, PsbD, PsbE, PsbF, PsbH, PsbI, PsbJ, PsbK, PsbL, PsbM, PsbT, PsbX, PsbY, PsbZ, Psb30/Ycf12, peripheral proteins PsbO, CyanoQ (PsbQ), PsbU, PsbV and a large number of cofactors. It forms dimeric complexes.</text>
</comment>
<comment type="subcellular location">
    <subcellularLocation>
        <location evidence="1">Cellular thylakoid membrane</location>
        <topology evidence="1">Single-pass membrane protein</topology>
    </subcellularLocation>
</comment>
<comment type="similarity">
    <text evidence="1">Belongs to the PsbE/PsbF family.</text>
</comment>
<name>PSBF_GLOC7</name>
<keyword id="KW-0249">Electron transport</keyword>
<keyword id="KW-0349">Heme</keyword>
<keyword id="KW-0408">Iron</keyword>
<keyword id="KW-0472">Membrane</keyword>
<keyword id="KW-0479">Metal-binding</keyword>
<keyword id="KW-0602">Photosynthesis</keyword>
<keyword id="KW-0604">Photosystem II</keyword>
<keyword id="KW-1185">Reference proteome</keyword>
<keyword id="KW-0793">Thylakoid</keyword>
<keyword id="KW-0812">Transmembrane</keyword>
<keyword id="KW-1133">Transmembrane helix</keyword>
<keyword id="KW-0813">Transport</keyword>